<feature type="chain" id="PRO_1000059741" description="ATP-dependent 6-phosphofructokinase">
    <location>
        <begin position="1"/>
        <end position="319"/>
    </location>
</feature>
<feature type="active site" description="Proton acceptor" evidence="1">
    <location>
        <position position="127"/>
    </location>
</feature>
<feature type="binding site" evidence="1">
    <location>
        <position position="11"/>
    </location>
    <ligand>
        <name>ATP</name>
        <dbReference type="ChEBI" id="CHEBI:30616"/>
    </ligand>
</feature>
<feature type="binding site" evidence="1">
    <location>
        <begin position="21"/>
        <end position="25"/>
    </location>
    <ligand>
        <name>ADP</name>
        <dbReference type="ChEBI" id="CHEBI:456216"/>
        <note>allosteric activator; ligand shared between dimeric partners</note>
    </ligand>
</feature>
<feature type="binding site" evidence="1">
    <location>
        <begin position="72"/>
        <end position="73"/>
    </location>
    <ligand>
        <name>ATP</name>
        <dbReference type="ChEBI" id="CHEBI:30616"/>
    </ligand>
</feature>
<feature type="binding site" evidence="1">
    <location>
        <begin position="102"/>
        <end position="105"/>
    </location>
    <ligand>
        <name>ATP</name>
        <dbReference type="ChEBI" id="CHEBI:30616"/>
    </ligand>
</feature>
<feature type="binding site" evidence="1">
    <location>
        <position position="103"/>
    </location>
    <ligand>
        <name>Mg(2+)</name>
        <dbReference type="ChEBI" id="CHEBI:18420"/>
        <note>catalytic</note>
    </ligand>
</feature>
<feature type="binding site" description="in other chain" evidence="1">
    <location>
        <begin position="125"/>
        <end position="127"/>
    </location>
    <ligand>
        <name>substrate</name>
        <note>ligand shared between dimeric partners</note>
    </ligand>
</feature>
<feature type="binding site" description="in other chain" evidence="1">
    <location>
        <position position="154"/>
    </location>
    <ligand>
        <name>ADP</name>
        <dbReference type="ChEBI" id="CHEBI:456216"/>
        <note>allosteric activator; ligand shared between dimeric partners</note>
    </ligand>
</feature>
<feature type="binding site" evidence="1">
    <location>
        <position position="162"/>
    </location>
    <ligand>
        <name>substrate</name>
        <note>ligand shared between dimeric partners</note>
    </ligand>
</feature>
<feature type="binding site" description="in other chain" evidence="1">
    <location>
        <begin position="169"/>
        <end position="171"/>
    </location>
    <ligand>
        <name>substrate</name>
        <note>ligand shared between dimeric partners</note>
    </ligand>
</feature>
<feature type="binding site" description="in other chain" evidence="1">
    <location>
        <begin position="185"/>
        <end position="187"/>
    </location>
    <ligand>
        <name>ADP</name>
        <dbReference type="ChEBI" id="CHEBI:456216"/>
        <note>allosteric activator; ligand shared between dimeric partners</note>
    </ligand>
</feature>
<feature type="binding site" description="in other chain" evidence="1">
    <location>
        <position position="211"/>
    </location>
    <ligand>
        <name>ADP</name>
        <dbReference type="ChEBI" id="CHEBI:456216"/>
        <note>allosteric activator; ligand shared between dimeric partners</note>
    </ligand>
</feature>
<feature type="binding site" description="in other chain" evidence="1">
    <location>
        <begin position="213"/>
        <end position="215"/>
    </location>
    <ligand>
        <name>ADP</name>
        <dbReference type="ChEBI" id="CHEBI:456216"/>
        <note>allosteric activator; ligand shared between dimeric partners</note>
    </ligand>
</feature>
<feature type="binding site" description="in other chain" evidence="1">
    <location>
        <position position="222"/>
    </location>
    <ligand>
        <name>substrate</name>
        <note>ligand shared between dimeric partners</note>
    </ligand>
</feature>
<feature type="binding site" evidence="1">
    <location>
        <position position="243"/>
    </location>
    <ligand>
        <name>substrate</name>
        <note>ligand shared between dimeric partners</note>
    </ligand>
</feature>
<feature type="binding site" description="in other chain" evidence="1">
    <location>
        <begin position="249"/>
        <end position="252"/>
    </location>
    <ligand>
        <name>substrate</name>
        <note>ligand shared between dimeric partners</note>
    </ligand>
</feature>
<sequence length="319" mass="34270">MKRIGVLTSGGDSPGMNAAIRAVVRKAIFHDIEVYGIYHGYAGLISGHIEKLELGSVGDIIPRGGTKLYTARCLEFKDPEVRLKGIEQLKKHGIEGLVVIGGDGSYQGAKKLTEQGFPCVGVPGTIDNDIPGTDFTIGFDTALNTVIDAIDKIRDTATSHERTYVIEVMGRHAGDIALWAGLADGAETILIPEEEYDMDDVIARLKRGSERGKKHSIIVVAEGVGSAIDIGKHIEEATNFDTRVTVLGHVQRGGSPSAQDRVLASRLGARAVELLIAGKGGRCVGIQDNKLVDHDIIEALAQKHTIDKDMYQLSKELSI</sequence>
<reference key="1">
    <citation type="journal article" date="2003" name="Nature">
        <title>Genome sequence of Bacillus cereus and comparative analysis with Bacillus anthracis.</title>
        <authorList>
            <person name="Ivanova N."/>
            <person name="Sorokin A."/>
            <person name="Anderson I."/>
            <person name="Galleron N."/>
            <person name="Candelon B."/>
            <person name="Kapatral V."/>
            <person name="Bhattacharyya A."/>
            <person name="Reznik G."/>
            <person name="Mikhailova N."/>
            <person name="Lapidus A."/>
            <person name="Chu L."/>
            <person name="Mazur M."/>
            <person name="Goltsman E."/>
            <person name="Larsen N."/>
            <person name="D'Souza M."/>
            <person name="Walunas T."/>
            <person name="Grechkin Y."/>
            <person name="Pusch G."/>
            <person name="Haselkorn R."/>
            <person name="Fonstein M."/>
            <person name="Ehrlich S.D."/>
            <person name="Overbeek R."/>
            <person name="Kyrpides N.C."/>
        </authorList>
    </citation>
    <scope>NUCLEOTIDE SEQUENCE [LARGE SCALE GENOMIC DNA]</scope>
    <source>
        <strain>ATCC 14579 / DSM 31 / CCUG 7414 / JCM 2152 / NBRC 15305 / NCIMB 9373 / NCTC 2599 / NRRL B-3711</strain>
    </source>
</reference>
<dbReference type="EC" id="2.7.1.11" evidence="1"/>
<dbReference type="EMBL" id="AE016877">
    <property type="protein sequence ID" value="AAP11507.1"/>
    <property type="molecule type" value="Genomic_DNA"/>
</dbReference>
<dbReference type="RefSeq" id="NP_834306.1">
    <property type="nucleotide sequence ID" value="NC_004722.1"/>
</dbReference>
<dbReference type="RefSeq" id="WP_000821167.1">
    <property type="nucleotide sequence ID" value="NC_004722.1"/>
</dbReference>
<dbReference type="SMR" id="Q817F3"/>
<dbReference type="STRING" id="226900.BC_4600"/>
<dbReference type="MetOSite" id="Q817F3"/>
<dbReference type="KEGG" id="bce:BC4600"/>
<dbReference type="PATRIC" id="fig|226900.8.peg.4761"/>
<dbReference type="HOGENOM" id="CLU_020655_0_1_9"/>
<dbReference type="UniPathway" id="UPA00109">
    <property type="reaction ID" value="UER00182"/>
</dbReference>
<dbReference type="Proteomes" id="UP000001417">
    <property type="component" value="Chromosome"/>
</dbReference>
<dbReference type="GO" id="GO:0005945">
    <property type="term" value="C:6-phosphofructokinase complex"/>
    <property type="evidence" value="ECO:0000318"/>
    <property type="project" value="GO_Central"/>
</dbReference>
<dbReference type="GO" id="GO:0003872">
    <property type="term" value="F:6-phosphofructokinase activity"/>
    <property type="evidence" value="ECO:0000318"/>
    <property type="project" value="GO_Central"/>
</dbReference>
<dbReference type="GO" id="GO:0005524">
    <property type="term" value="F:ATP binding"/>
    <property type="evidence" value="ECO:0007669"/>
    <property type="project" value="UniProtKB-KW"/>
</dbReference>
<dbReference type="GO" id="GO:0070095">
    <property type="term" value="F:fructose-6-phosphate binding"/>
    <property type="evidence" value="ECO:0000318"/>
    <property type="project" value="GO_Central"/>
</dbReference>
<dbReference type="GO" id="GO:0046872">
    <property type="term" value="F:metal ion binding"/>
    <property type="evidence" value="ECO:0007669"/>
    <property type="project" value="UniProtKB-KW"/>
</dbReference>
<dbReference type="GO" id="GO:0061621">
    <property type="term" value="P:canonical glycolysis"/>
    <property type="evidence" value="ECO:0000318"/>
    <property type="project" value="GO_Central"/>
</dbReference>
<dbReference type="GO" id="GO:0030388">
    <property type="term" value="P:fructose 1,6-bisphosphate metabolic process"/>
    <property type="evidence" value="ECO:0000318"/>
    <property type="project" value="GO_Central"/>
</dbReference>
<dbReference type="GO" id="GO:0006002">
    <property type="term" value="P:fructose 6-phosphate metabolic process"/>
    <property type="evidence" value="ECO:0000318"/>
    <property type="project" value="GO_Central"/>
</dbReference>
<dbReference type="CDD" id="cd00763">
    <property type="entry name" value="Bacterial_PFK"/>
    <property type="match status" value="1"/>
</dbReference>
<dbReference type="FunFam" id="3.40.50.450:FF:000001">
    <property type="entry name" value="ATP-dependent 6-phosphofructokinase"/>
    <property type="match status" value="1"/>
</dbReference>
<dbReference type="FunFam" id="3.40.50.460:FF:000002">
    <property type="entry name" value="ATP-dependent 6-phosphofructokinase"/>
    <property type="match status" value="1"/>
</dbReference>
<dbReference type="Gene3D" id="3.40.50.450">
    <property type="match status" value="1"/>
</dbReference>
<dbReference type="Gene3D" id="3.40.50.460">
    <property type="entry name" value="Phosphofructokinase domain"/>
    <property type="match status" value="1"/>
</dbReference>
<dbReference type="HAMAP" id="MF_00339">
    <property type="entry name" value="Phosphofructokinase_I_B1"/>
    <property type="match status" value="1"/>
</dbReference>
<dbReference type="InterPro" id="IPR022953">
    <property type="entry name" value="ATP_PFK"/>
</dbReference>
<dbReference type="InterPro" id="IPR012003">
    <property type="entry name" value="ATP_PFK_prok-type"/>
</dbReference>
<dbReference type="InterPro" id="IPR012828">
    <property type="entry name" value="PFKA_ATP_prok"/>
</dbReference>
<dbReference type="InterPro" id="IPR015912">
    <property type="entry name" value="Phosphofructokinase_CS"/>
</dbReference>
<dbReference type="InterPro" id="IPR000023">
    <property type="entry name" value="Phosphofructokinase_dom"/>
</dbReference>
<dbReference type="InterPro" id="IPR035966">
    <property type="entry name" value="PKF_sf"/>
</dbReference>
<dbReference type="NCBIfam" id="TIGR02482">
    <property type="entry name" value="PFKA_ATP"/>
    <property type="match status" value="1"/>
</dbReference>
<dbReference type="NCBIfam" id="NF002872">
    <property type="entry name" value="PRK03202.1"/>
    <property type="match status" value="1"/>
</dbReference>
<dbReference type="PANTHER" id="PTHR13697:SF4">
    <property type="entry name" value="ATP-DEPENDENT 6-PHOSPHOFRUCTOKINASE"/>
    <property type="match status" value="1"/>
</dbReference>
<dbReference type="PANTHER" id="PTHR13697">
    <property type="entry name" value="PHOSPHOFRUCTOKINASE"/>
    <property type="match status" value="1"/>
</dbReference>
<dbReference type="Pfam" id="PF00365">
    <property type="entry name" value="PFK"/>
    <property type="match status" value="1"/>
</dbReference>
<dbReference type="PIRSF" id="PIRSF000532">
    <property type="entry name" value="ATP_PFK_prok"/>
    <property type="match status" value="1"/>
</dbReference>
<dbReference type="PRINTS" id="PR00476">
    <property type="entry name" value="PHFRCTKINASE"/>
</dbReference>
<dbReference type="SUPFAM" id="SSF53784">
    <property type="entry name" value="Phosphofructokinase"/>
    <property type="match status" value="1"/>
</dbReference>
<dbReference type="PROSITE" id="PS00433">
    <property type="entry name" value="PHOSPHOFRUCTOKINASE"/>
    <property type="match status" value="1"/>
</dbReference>
<evidence type="ECO:0000255" key="1">
    <source>
        <dbReference type="HAMAP-Rule" id="MF_00339"/>
    </source>
</evidence>
<keyword id="KW-0021">Allosteric enzyme</keyword>
<keyword id="KW-0067">ATP-binding</keyword>
<keyword id="KW-0963">Cytoplasm</keyword>
<keyword id="KW-0324">Glycolysis</keyword>
<keyword id="KW-0418">Kinase</keyword>
<keyword id="KW-0460">Magnesium</keyword>
<keyword id="KW-0479">Metal-binding</keyword>
<keyword id="KW-0547">Nucleotide-binding</keyword>
<keyword id="KW-1185">Reference proteome</keyword>
<keyword id="KW-0808">Transferase</keyword>
<organism>
    <name type="scientific">Bacillus cereus (strain ATCC 14579 / DSM 31 / CCUG 7414 / JCM 2152 / NBRC 15305 / NCIMB 9373 / NCTC 2599 / NRRL B-3711)</name>
    <dbReference type="NCBI Taxonomy" id="226900"/>
    <lineage>
        <taxon>Bacteria</taxon>
        <taxon>Bacillati</taxon>
        <taxon>Bacillota</taxon>
        <taxon>Bacilli</taxon>
        <taxon>Bacillales</taxon>
        <taxon>Bacillaceae</taxon>
        <taxon>Bacillus</taxon>
        <taxon>Bacillus cereus group</taxon>
    </lineage>
</organism>
<comment type="function">
    <text evidence="1">Catalyzes the phosphorylation of D-fructose 6-phosphate to fructose 1,6-bisphosphate by ATP, the first committing step of glycolysis.</text>
</comment>
<comment type="catalytic activity">
    <reaction evidence="1">
        <text>beta-D-fructose 6-phosphate + ATP = beta-D-fructose 1,6-bisphosphate + ADP + H(+)</text>
        <dbReference type="Rhea" id="RHEA:16109"/>
        <dbReference type="ChEBI" id="CHEBI:15378"/>
        <dbReference type="ChEBI" id="CHEBI:30616"/>
        <dbReference type="ChEBI" id="CHEBI:32966"/>
        <dbReference type="ChEBI" id="CHEBI:57634"/>
        <dbReference type="ChEBI" id="CHEBI:456216"/>
        <dbReference type="EC" id="2.7.1.11"/>
    </reaction>
</comment>
<comment type="cofactor">
    <cofactor evidence="1">
        <name>Mg(2+)</name>
        <dbReference type="ChEBI" id="CHEBI:18420"/>
    </cofactor>
</comment>
<comment type="activity regulation">
    <text evidence="1">Allosterically activated by ADP and other diphosphonucleosides, and allosterically inhibited by phosphoenolpyruvate.</text>
</comment>
<comment type="pathway">
    <text evidence="1">Carbohydrate degradation; glycolysis; D-glyceraldehyde 3-phosphate and glycerone phosphate from D-glucose: step 3/4.</text>
</comment>
<comment type="subunit">
    <text evidence="1">Homotetramer.</text>
</comment>
<comment type="subcellular location">
    <subcellularLocation>
        <location evidence="1">Cytoplasm</location>
    </subcellularLocation>
</comment>
<comment type="similarity">
    <text evidence="1">Belongs to the phosphofructokinase type A (PFKA) family. ATP-dependent PFK group I subfamily. Prokaryotic clade 'B1' sub-subfamily.</text>
</comment>
<proteinExistence type="inferred from homology"/>
<protein>
    <recommendedName>
        <fullName evidence="1">ATP-dependent 6-phosphofructokinase</fullName>
        <shortName evidence="1">ATP-PFK</shortName>
        <shortName evidence="1">Phosphofructokinase</shortName>
        <ecNumber evidence="1">2.7.1.11</ecNumber>
    </recommendedName>
    <alternativeName>
        <fullName evidence="1">Phosphohexokinase</fullName>
    </alternativeName>
</protein>
<accession>Q817F3</accession>
<name>PFKA_BACCR</name>
<gene>
    <name evidence="1" type="primary">pfkA</name>
    <name type="ordered locus">BC_4600</name>
</gene>